<keyword id="KW-0106">Calcium</keyword>
<keyword id="KW-1015">Disulfide bond</keyword>
<keyword id="KW-0325">Glycoprotein</keyword>
<keyword id="KW-0326">Glycosidase</keyword>
<keyword id="KW-0378">Hydrolase</keyword>
<keyword id="KW-0472">Membrane</keyword>
<keyword id="KW-0479">Metal-binding</keyword>
<keyword id="KW-1185">Reference proteome</keyword>
<keyword id="KW-0735">Signal-anchor</keyword>
<keyword id="KW-0812">Transmembrane</keyword>
<keyword id="KW-1133">Transmembrane helix</keyword>
<proteinExistence type="evidence at protein level"/>
<reference key="1">
    <citation type="journal article" date="2002" name="Nature">
        <title>The genome sequence of Schizosaccharomyces pombe.</title>
        <authorList>
            <person name="Wood V."/>
            <person name="Gwilliam R."/>
            <person name="Rajandream M.A."/>
            <person name="Lyne M.H."/>
            <person name="Lyne R."/>
            <person name="Stewart A."/>
            <person name="Sgouros J.G."/>
            <person name="Peat N."/>
            <person name="Hayles J."/>
            <person name="Baker S.G."/>
            <person name="Basham D."/>
            <person name="Bowman S."/>
            <person name="Brooks K."/>
            <person name="Brown D."/>
            <person name="Brown S."/>
            <person name="Chillingworth T."/>
            <person name="Churcher C.M."/>
            <person name="Collins M."/>
            <person name="Connor R."/>
            <person name="Cronin A."/>
            <person name="Davis P."/>
            <person name="Feltwell T."/>
            <person name="Fraser A."/>
            <person name="Gentles S."/>
            <person name="Goble A."/>
            <person name="Hamlin N."/>
            <person name="Harris D.E."/>
            <person name="Hidalgo J."/>
            <person name="Hodgson G."/>
            <person name="Holroyd S."/>
            <person name="Hornsby T."/>
            <person name="Howarth S."/>
            <person name="Huckle E.J."/>
            <person name="Hunt S."/>
            <person name="Jagels K."/>
            <person name="James K.D."/>
            <person name="Jones L."/>
            <person name="Jones M."/>
            <person name="Leather S."/>
            <person name="McDonald S."/>
            <person name="McLean J."/>
            <person name="Mooney P."/>
            <person name="Moule S."/>
            <person name="Mungall K.L."/>
            <person name="Murphy L.D."/>
            <person name="Niblett D."/>
            <person name="Odell C."/>
            <person name="Oliver K."/>
            <person name="O'Neil S."/>
            <person name="Pearson D."/>
            <person name="Quail M.A."/>
            <person name="Rabbinowitsch E."/>
            <person name="Rutherford K.M."/>
            <person name="Rutter S."/>
            <person name="Saunders D."/>
            <person name="Seeger K."/>
            <person name="Sharp S."/>
            <person name="Skelton J."/>
            <person name="Simmonds M.N."/>
            <person name="Squares R."/>
            <person name="Squares S."/>
            <person name="Stevens K."/>
            <person name="Taylor K."/>
            <person name="Taylor R.G."/>
            <person name="Tivey A."/>
            <person name="Walsh S.V."/>
            <person name="Warren T."/>
            <person name="Whitehead S."/>
            <person name="Woodward J.R."/>
            <person name="Volckaert G."/>
            <person name="Aert R."/>
            <person name="Robben J."/>
            <person name="Grymonprez B."/>
            <person name="Weltjens I."/>
            <person name="Vanstreels E."/>
            <person name="Rieger M."/>
            <person name="Schaefer M."/>
            <person name="Mueller-Auer S."/>
            <person name="Gabel C."/>
            <person name="Fuchs M."/>
            <person name="Duesterhoeft A."/>
            <person name="Fritzc C."/>
            <person name="Holzer E."/>
            <person name="Moestl D."/>
            <person name="Hilbert H."/>
            <person name="Borzym K."/>
            <person name="Langer I."/>
            <person name="Beck A."/>
            <person name="Lehrach H."/>
            <person name="Reinhardt R."/>
            <person name="Pohl T.M."/>
            <person name="Eger P."/>
            <person name="Zimmermann W."/>
            <person name="Wedler H."/>
            <person name="Wambutt R."/>
            <person name="Purnelle B."/>
            <person name="Goffeau A."/>
            <person name="Cadieu E."/>
            <person name="Dreano S."/>
            <person name="Gloux S."/>
            <person name="Lelaure V."/>
            <person name="Mottier S."/>
            <person name="Galibert F."/>
            <person name="Aves S.J."/>
            <person name="Xiang Z."/>
            <person name="Hunt C."/>
            <person name="Moore K."/>
            <person name="Hurst S.M."/>
            <person name="Lucas M."/>
            <person name="Rochet M."/>
            <person name="Gaillardin C."/>
            <person name="Tallada V.A."/>
            <person name="Garzon A."/>
            <person name="Thode G."/>
            <person name="Daga R.R."/>
            <person name="Cruzado L."/>
            <person name="Jimenez J."/>
            <person name="Sanchez M."/>
            <person name="del Rey F."/>
            <person name="Benito J."/>
            <person name="Dominguez A."/>
            <person name="Revuelta J.L."/>
            <person name="Moreno S."/>
            <person name="Armstrong J."/>
            <person name="Forsburg S.L."/>
            <person name="Cerutti L."/>
            <person name="Lowe T."/>
            <person name="McCombie W.R."/>
            <person name="Paulsen I."/>
            <person name="Potashkin J."/>
            <person name="Shpakovski G.V."/>
            <person name="Ussery D."/>
            <person name="Barrell B.G."/>
            <person name="Nurse P."/>
        </authorList>
    </citation>
    <scope>NUCLEOTIDE SEQUENCE [LARGE SCALE GENOMIC DNA]</scope>
    <source>
        <strain>972 / ATCC 24843</strain>
    </source>
</reference>
<reference key="2">
    <citation type="journal article" date="2005" name="Mol. Biol. Cell">
        <title>Characterization of Schizosaccharomyces pombe ER alpha-mannosidase: a reevaluation of the role of the enzyme on ER-associated degradation.</title>
        <authorList>
            <person name="Movsichoff F."/>
            <person name="Castro O.A."/>
            <person name="Parodi A.J."/>
        </authorList>
    </citation>
    <scope>FUNCTION</scope>
    <scope>CATALYTIC ACTIVITY</scope>
    <scope>ACTIVITY REGULATION</scope>
</reference>
<evidence type="ECO:0000250" key="1">
    <source>
        <dbReference type="UniProtKB" id="P31723"/>
    </source>
</evidence>
<evidence type="ECO:0000250" key="2">
    <source>
        <dbReference type="UniProtKB" id="P32906"/>
    </source>
</evidence>
<evidence type="ECO:0000250" key="3">
    <source>
        <dbReference type="UniProtKB" id="P45700"/>
    </source>
</evidence>
<evidence type="ECO:0000255" key="4"/>
<evidence type="ECO:0000269" key="5">
    <source>
    </source>
</evidence>
<evidence type="ECO:0000305" key="6"/>
<name>MNS1_SCHPO</name>
<accession>Q9P7C3</accession>
<accession>Q9C0Z6</accession>
<organism>
    <name type="scientific">Schizosaccharomyces pombe (strain 972 / ATCC 24843)</name>
    <name type="common">Fission yeast</name>
    <dbReference type="NCBI Taxonomy" id="284812"/>
    <lineage>
        <taxon>Eukaryota</taxon>
        <taxon>Fungi</taxon>
        <taxon>Dikarya</taxon>
        <taxon>Ascomycota</taxon>
        <taxon>Taphrinomycotina</taxon>
        <taxon>Schizosaccharomycetes</taxon>
        <taxon>Schizosaccharomycetales</taxon>
        <taxon>Schizosaccharomycetaceae</taxon>
        <taxon>Schizosaccharomyces</taxon>
    </lineage>
</organism>
<sequence length="521" mass="60813">MVKRRTVKYFLRRILALFVLCVPIYYLYTTVQRPPGYTKLKGSTRRKALIKKTFIESWTDYETYGWGKDEYYPIIKRGRNYLRKGMGWMIIDSLDTMMIMGLDEQVLRAREWVNNSLTWNQDDEEVSVFETTIRILGGLLSSYHLSQDKLYLDRAVDLADRLLAAYNTSTGLPRSNVNLGTRKSRKRTREYFVSTAESGTVQMELRYLSYLTGDPKYWITADKTMEVLLGDATWSHTGLVPITVNLITGAYVGRNIRLGSHGDSYYEYLLKQDLQLFSSGTVYRKAFDLSVDGIIEYLLNYTTPNHFAYIAELPGGLEHAQLPKMDHLVCFLPGTLMWGATNGTSLEAARTSKNWGTRQERDVKLAQELMRTCYEMYNMTATGLAPEIVFFDVDQTKNEIYSKRRDQHNLMRPETVESLFILYRITRDEIYREWGWNIFVSFLRYSRLPGRDAFTCLDSVESKKVKDQRDKTESFWFAETLKYLYLLFEDDFSILPLTNYTFNTEAHPFPNIENNMDLYTV</sequence>
<feature type="chain" id="PRO_0000210320" description="Endoplasmic reticulum mannosyl-oligosaccharide 1,2-alpha-mannosidase">
    <location>
        <begin position="1"/>
        <end position="521"/>
    </location>
</feature>
<feature type="topological domain" description="Cytoplasmic" evidence="4">
    <location>
        <begin position="1"/>
        <end position="8"/>
    </location>
</feature>
<feature type="transmembrane region" description="Helical; Signal-anchor for type II membrane protein" evidence="4">
    <location>
        <begin position="9"/>
        <end position="31"/>
    </location>
</feature>
<feature type="topological domain" description="Lumenal" evidence="4">
    <location>
        <begin position="32"/>
        <end position="521"/>
    </location>
</feature>
<feature type="active site" description="Proton donor" evidence="1">
    <location>
        <position position="387"/>
    </location>
</feature>
<feature type="binding site" evidence="2">
    <location>
        <position position="504"/>
    </location>
    <ligand>
        <name>Ca(2+)</name>
        <dbReference type="ChEBI" id="CHEBI:29108"/>
    </ligand>
</feature>
<feature type="glycosylation site" description="N-linked (GlcNAc...) asparagine" evidence="4">
    <location>
        <position position="114"/>
    </location>
</feature>
<feature type="glycosylation site" description="N-linked (GlcNAc...) asparagine" evidence="4">
    <location>
        <position position="167"/>
    </location>
</feature>
<feature type="glycosylation site" description="N-linked (GlcNAc...) asparagine" evidence="4">
    <location>
        <position position="300"/>
    </location>
</feature>
<feature type="glycosylation site" description="N-linked (GlcNAc...) asparagine" evidence="4">
    <location>
        <position position="342"/>
    </location>
</feature>
<feature type="glycosylation site" description="N-linked (GlcNAc...) asparagine" evidence="4">
    <location>
        <position position="378"/>
    </location>
</feature>
<feature type="glycosylation site" description="N-linked (GlcNAc...) asparagine" evidence="4">
    <location>
        <position position="499"/>
    </location>
</feature>
<feature type="disulfide bond" evidence="2">
    <location>
        <begin position="330"/>
        <end position="373"/>
    </location>
</feature>
<comment type="function">
    <text evidence="5">Involved in glycoprotein quality control as it is important for the targeting of misfolded glycoproteins for degradation. It trims a single alpha-1,2-linked mannose residue from Man(9)GlcNAc(2) to produce Man(8)GlcNAc(2) with low efficiency.</text>
</comment>
<comment type="catalytic activity">
    <reaction evidence="5">
        <text>N(4)-(alpha-D-Man-(1-&gt;2)-alpha-D-Man-(1-&gt;2)-alpha-D-Man-(1-&gt;3)-[alpha-D-Man-(1-&gt;2)-alpha-D-Man-(1-&gt;3)-[alpha-D-Man-(1-&gt;2)-alpha-D-Man-(1-&gt;6)]-alpha-D-Man-(1-&gt;6)]-beta-D-Man-(1-&gt;4)-beta-D-GlcNAc-(1-&gt;4)-beta-D-GlcNAc)-L-asparaginyl-[protein] (N-glucan mannose isomer 9A1,2,3B1,2,3) + 4 H2O = N(4)-(alpha-D-Man-(1-&gt;3)-[alpha-D-Man-(1-&gt;3)-[alpha-D-Man-(1-&gt;6)]-alpha-D-Man-(1-&gt;6)]-beta-D-Man-(1-&gt;4)-beta-D-GlcNAc-(1-&gt;4)-beta-D-GlcNAc)-L-asparaginyl-[protein] (N-glucan mannose isomer 5A1,2) + 4 beta-D-mannose</text>
        <dbReference type="Rhea" id="RHEA:56008"/>
        <dbReference type="Rhea" id="RHEA-COMP:14356"/>
        <dbReference type="Rhea" id="RHEA-COMP:14367"/>
        <dbReference type="ChEBI" id="CHEBI:15377"/>
        <dbReference type="ChEBI" id="CHEBI:28563"/>
        <dbReference type="ChEBI" id="CHEBI:59087"/>
        <dbReference type="ChEBI" id="CHEBI:139493"/>
        <dbReference type="EC" id="3.2.1.113"/>
    </reaction>
</comment>
<comment type="catalytic activity">
    <reaction evidence="5">
        <text>N(4)-(alpha-D-Man-(1-&gt;2)-alpha-D-Man-(1-&gt;2)-alpha-D-Man-(1-&gt;3)-[alpha-D-Man-(1-&gt;3)-[alpha-D-Man-(1-&gt;2)-alpha-D-Man-(1-&gt;6)]-alpha-D-Man-(1-&gt;6)]-beta-D-Man-(1-&gt;4)-beta-D-GlcNAc-(1-&gt;4)-beta-D-GlcNAc)-L-asparaginyl-[protein] (N-glucan mannose isomer 8A1,2,3B1,3) + 3 H2O = N(4)-(alpha-D-Man-(1-&gt;3)-[alpha-D-Man-(1-&gt;3)-[alpha-D-Man-(1-&gt;6)]-alpha-D-Man-(1-&gt;6)]-beta-D-Man-(1-&gt;4)-beta-D-GlcNAc-(1-&gt;4)-beta-D-GlcNAc)-L-asparaginyl-[protein] (N-glucan mannose isomer 5A1,2) + 3 beta-D-mannose</text>
        <dbReference type="Rhea" id="RHEA:56028"/>
        <dbReference type="Rhea" id="RHEA-COMP:14358"/>
        <dbReference type="Rhea" id="RHEA-COMP:14367"/>
        <dbReference type="ChEBI" id="CHEBI:15377"/>
        <dbReference type="ChEBI" id="CHEBI:28563"/>
        <dbReference type="ChEBI" id="CHEBI:59087"/>
        <dbReference type="ChEBI" id="CHEBI:60628"/>
        <dbReference type="EC" id="3.2.1.113"/>
    </reaction>
</comment>
<comment type="cofactor">
    <cofactor evidence="3">
        <name>Ca(2+)</name>
        <dbReference type="ChEBI" id="CHEBI:29108"/>
    </cofactor>
</comment>
<comment type="activity regulation">
    <text evidence="5">Inhibited by kifunensine.</text>
</comment>
<comment type="pathway">
    <text evidence="2">Protein modification; protein glycosylation.</text>
</comment>
<comment type="subcellular location">
    <subcellularLocation>
        <location evidence="6">Membrane</location>
        <topology evidence="6">Single-pass type II membrane protein</topology>
    </subcellularLocation>
</comment>
<comment type="similarity">
    <text evidence="6">Belongs to the glycosyl hydrolase 47 family.</text>
</comment>
<protein>
    <recommendedName>
        <fullName>Endoplasmic reticulum mannosyl-oligosaccharide 1,2-alpha-mannosidase</fullName>
        <ecNumber evidence="5">3.2.1.113</ecNumber>
    </recommendedName>
    <alternativeName>
        <fullName>ER alpha-1,2-mannosidase</fullName>
    </alternativeName>
    <alternativeName>
        <fullName>Man(9)-alpha-mannosidase</fullName>
    </alternativeName>
</protein>
<dbReference type="EC" id="3.2.1.113" evidence="5"/>
<dbReference type="EMBL" id="CU329670">
    <property type="protein sequence ID" value="CAC36930.2"/>
    <property type="molecule type" value="Genomic_DNA"/>
</dbReference>
<dbReference type="RefSeq" id="NP_594139.2">
    <property type="nucleotide sequence ID" value="NM_001019563.2"/>
</dbReference>
<dbReference type="SMR" id="Q9P7C3"/>
<dbReference type="FunCoup" id="Q9P7C3">
    <property type="interactions" value="565"/>
</dbReference>
<dbReference type="STRING" id="284812.Q9P7C3"/>
<dbReference type="CAZy" id="GH47">
    <property type="family name" value="Glycoside Hydrolase Family 47"/>
</dbReference>
<dbReference type="iPTMnet" id="Q9P7C3"/>
<dbReference type="PaxDb" id="4896-SPAC2E1P5.01c.1"/>
<dbReference type="EnsemblFungi" id="SPAC2E1P5.01c.1">
    <property type="protein sequence ID" value="SPAC2E1P5.01c.1:pep"/>
    <property type="gene ID" value="SPAC2E1P5.01c"/>
</dbReference>
<dbReference type="GeneID" id="2541719"/>
<dbReference type="KEGG" id="spo:2541719"/>
<dbReference type="PomBase" id="SPAC2E1P5.01c"/>
<dbReference type="VEuPathDB" id="FungiDB:SPAC2E1P5.01c"/>
<dbReference type="eggNOG" id="KOG2431">
    <property type="taxonomic scope" value="Eukaryota"/>
</dbReference>
<dbReference type="HOGENOM" id="CLU_003818_3_0_1"/>
<dbReference type="InParanoid" id="Q9P7C3"/>
<dbReference type="OMA" id="AAFKHSW"/>
<dbReference type="PhylomeDB" id="Q9P7C3"/>
<dbReference type="UniPathway" id="UPA00378"/>
<dbReference type="PRO" id="PR:Q9P7C3"/>
<dbReference type="Proteomes" id="UP000002485">
    <property type="component" value="Chromosome I"/>
</dbReference>
<dbReference type="GO" id="GO:0005737">
    <property type="term" value="C:cytoplasm"/>
    <property type="evidence" value="ECO:0007005"/>
    <property type="project" value="PomBase"/>
</dbReference>
<dbReference type="GO" id="GO:0005783">
    <property type="term" value="C:endoplasmic reticulum"/>
    <property type="evidence" value="ECO:0007005"/>
    <property type="project" value="PomBase"/>
</dbReference>
<dbReference type="GO" id="GO:0005789">
    <property type="term" value="C:endoplasmic reticulum membrane"/>
    <property type="evidence" value="ECO:0000305"/>
    <property type="project" value="PomBase"/>
</dbReference>
<dbReference type="GO" id="GO:0016020">
    <property type="term" value="C:membrane"/>
    <property type="evidence" value="ECO:0000318"/>
    <property type="project" value="GO_Central"/>
</dbReference>
<dbReference type="GO" id="GO:0005509">
    <property type="term" value="F:calcium ion binding"/>
    <property type="evidence" value="ECO:0000255"/>
    <property type="project" value="PomBase"/>
</dbReference>
<dbReference type="GO" id="GO:0004571">
    <property type="term" value="F:mannosyl-oligosaccharide 1,2-alpha-mannosidase activity"/>
    <property type="evidence" value="ECO:0000315"/>
    <property type="project" value="PomBase"/>
</dbReference>
<dbReference type="GO" id="GO:0005975">
    <property type="term" value="P:carbohydrate metabolic process"/>
    <property type="evidence" value="ECO:0007669"/>
    <property type="project" value="InterPro"/>
</dbReference>
<dbReference type="GO" id="GO:0036503">
    <property type="term" value="P:ERAD pathway"/>
    <property type="evidence" value="ECO:0000318"/>
    <property type="project" value="GO_Central"/>
</dbReference>
<dbReference type="GO" id="GO:0006486">
    <property type="term" value="P:protein glycosylation"/>
    <property type="evidence" value="ECO:0007669"/>
    <property type="project" value="UniProtKB-UniPathway"/>
</dbReference>
<dbReference type="GO" id="GO:0097466">
    <property type="term" value="P:ubiquitin-dependent glycoprotein ERAD pathway"/>
    <property type="evidence" value="ECO:0000315"/>
    <property type="project" value="PomBase"/>
</dbReference>
<dbReference type="Gene3D" id="1.50.10.10">
    <property type="match status" value="1"/>
</dbReference>
<dbReference type="InterPro" id="IPR012341">
    <property type="entry name" value="6hp_glycosidase-like_sf"/>
</dbReference>
<dbReference type="InterPro" id="IPR001382">
    <property type="entry name" value="Glyco_hydro_47"/>
</dbReference>
<dbReference type="InterPro" id="IPR050749">
    <property type="entry name" value="Glycosyl_Hydrolase_47"/>
</dbReference>
<dbReference type="InterPro" id="IPR036026">
    <property type="entry name" value="Seven-hairpin_glycosidases"/>
</dbReference>
<dbReference type="PANTHER" id="PTHR11742:SF55">
    <property type="entry name" value="ENDOPLASMIC RETICULUM MANNOSYL-OLIGOSACCHARIDE 1,2-ALPHA-MANNOSIDASE"/>
    <property type="match status" value="1"/>
</dbReference>
<dbReference type="PANTHER" id="PTHR11742">
    <property type="entry name" value="MANNOSYL-OLIGOSACCHARIDE ALPHA-1,2-MANNOSIDASE-RELATED"/>
    <property type="match status" value="1"/>
</dbReference>
<dbReference type="Pfam" id="PF01532">
    <property type="entry name" value="Glyco_hydro_47"/>
    <property type="match status" value="1"/>
</dbReference>
<dbReference type="PRINTS" id="PR00747">
    <property type="entry name" value="GLYHDRLASE47"/>
</dbReference>
<dbReference type="SUPFAM" id="SSF48225">
    <property type="entry name" value="Seven-hairpin glycosidases"/>
    <property type="match status" value="1"/>
</dbReference>
<gene>
    <name type="ORF">SPAC2E1P5.01c</name>
    <name type="ORF">SPAPB1E7.13c</name>
</gene>